<sequence length="93" mass="10721">MPRSLKKGPFVDDHLQAKVDVQNEKGTKQVIKTWSRRSTITPDFIGHTFAVHDGRKHVPVFVSENMVGHKLGEFAPTRTFKSHVKEDRKSKRR</sequence>
<reference key="1">
    <citation type="journal article" date="2004" name="Proc. Natl. Acad. Sci. U.S.A.">
        <title>The complete genomic sequence of Nocardia farcinica IFM 10152.</title>
        <authorList>
            <person name="Ishikawa J."/>
            <person name="Yamashita A."/>
            <person name="Mikami Y."/>
            <person name="Hoshino Y."/>
            <person name="Kurita H."/>
            <person name="Hotta K."/>
            <person name="Shiba T."/>
            <person name="Hattori M."/>
        </authorList>
    </citation>
    <scope>NUCLEOTIDE SEQUENCE [LARGE SCALE GENOMIC DNA]</scope>
    <source>
        <strain>IFM 10152</strain>
    </source>
</reference>
<gene>
    <name evidence="1" type="primary">rpsS</name>
    <name type="ordered locus">NFA_7370</name>
</gene>
<name>RS19_NOCFA</name>
<dbReference type="EMBL" id="AP006618">
    <property type="protein sequence ID" value="BAD55582.1"/>
    <property type="molecule type" value="Genomic_DNA"/>
</dbReference>
<dbReference type="RefSeq" id="WP_011207268.1">
    <property type="nucleotide sequence ID" value="NC_006361.1"/>
</dbReference>
<dbReference type="SMR" id="Q5Z1V9"/>
<dbReference type="STRING" id="247156.NFA_7370"/>
<dbReference type="GeneID" id="61131568"/>
<dbReference type="KEGG" id="nfa:NFA_7370"/>
<dbReference type="eggNOG" id="COG0185">
    <property type="taxonomic scope" value="Bacteria"/>
</dbReference>
<dbReference type="HOGENOM" id="CLU_144911_0_1_11"/>
<dbReference type="OrthoDB" id="9797833at2"/>
<dbReference type="Proteomes" id="UP000006820">
    <property type="component" value="Chromosome"/>
</dbReference>
<dbReference type="GO" id="GO:0005737">
    <property type="term" value="C:cytoplasm"/>
    <property type="evidence" value="ECO:0007669"/>
    <property type="project" value="UniProtKB-ARBA"/>
</dbReference>
<dbReference type="GO" id="GO:0015935">
    <property type="term" value="C:small ribosomal subunit"/>
    <property type="evidence" value="ECO:0007669"/>
    <property type="project" value="InterPro"/>
</dbReference>
<dbReference type="GO" id="GO:0019843">
    <property type="term" value="F:rRNA binding"/>
    <property type="evidence" value="ECO:0007669"/>
    <property type="project" value="UniProtKB-UniRule"/>
</dbReference>
<dbReference type="GO" id="GO:0003735">
    <property type="term" value="F:structural constituent of ribosome"/>
    <property type="evidence" value="ECO:0007669"/>
    <property type="project" value="InterPro"/>
</dbReference>
<dbReference type="GO" id="GO:0000028">
    <property type="term" value="P:ribosomal small subunit assembly"/>
    <property type="evidence" value="ECO:0007669"/>
    <property type="project" value="TreeGrafter"/>
</dbReference>
<dbReference type="GO" id="GO:0006412">
    <property type="term" value="P:translation"/>
    <property type="evidence" value="ECO:0007669"/>
    <property type="project" value="UniProtKB-UniRule"/>
</dbReference>
<dbReference type="FunFam" id="3.30.860.10:FF:000001">
    <property type="entry name" value="30S ribosomal protein S19"/>
    <property type="match status" value="1"/>
</dbReference>
<dbReference type="Gene3D" id="3.30.860.10">
    <property type="entry name" value="30s Ribosomal Protein S19, Chain A"/>
    <property type="match status" value="1"/>
</dbReference>
<dbReference type="HAMAP" id="MF_00531">
    <property type="entry name" value="Ribosomal_uS19"/>
    <property type="match status" value="1"/>
</dbReference>
<dbReference type="InterPro" id="IPR002222">
    <property type="entry name" value="Ribosomal_uS19"/>
</dbReference>
<dbReference type="InterPro" id="IPR005732">
    <property type="entry name" value="Ribosomal_uS19_bac-type"/>
</dbReference>
<dbReference type="InterPro" id="IPR020934">
    <property type="entry name" value="Ribosomal_uS19_CS"/>
</dbReference>
<dbReference type="InterPro" id="IPR023575">
    <property type="entry name" value="Ribosomal_uS19_SF"/>
</dbReference>
<dbReference type="NCBIfam" id="TIGR01050">
    <property type="entry name" value="rpsS_bact"/>
    <property type="match status" value="1"/>
</dbReference>
<dbReference type="PANTHER" id="PTHR11880">
    <property type="entry name" value="RIBOSOMAL PROTEIN S19P FAMILY MEMBER"/>
    <property type="match status" value="1"/>
</dbReference>
<dbReference type="PANTHER" id="PTHR11880:SF8">
    <property type="entry name" value="SMALL RIBOSOMAL SUBUNIT PROTEIN US19M"/>
    <property type="match status" value="1"/>
</dbReference>
<dbReference type="Pfam" id="PF00203">
    <property type="entry name" value="Ribosomal_S19"/>
    <property type="match status" value="1"/>
</dbReference>
<dbReference type="PIRSF" id="PIRSF002144">
    <property type="entry name" value="Ribosomal_S19"/>
    <property type="match status" value="1"/>
</dbReference>
<dbReference type="PRINTS" id="PR00975">
    <property type="entry name" value="RIBOSOMALS19"/>
</dbReference>
<dbReference type="SUPFAM" id="SSF54570">
    <property type="entry name" value="Ribosomal protein S19"/>
    <property type="match status" value="1"/>
</dbReference>
<dbReference type="PROSITE" id="PS00323">
    <property type="entry name" value="RIBOSOMAL_S19"/>
    <property type="match status" value="1"/>
</dbReference>
<comment type="function">
    <text evidence="1">Protein S19 forms a complex with S13 that binds strongly to the 16S ribosomal RNA.</text>
</comment>
<comment type="similarity">
    <text evidence="1">Belongs to the universal ribosomal protein uS19 family.</text>
</comment>
<evidence type="ECO:0000255" key="1">
    <source>
        <dbReference type="HAMAP-Rule" id="MF_00531"/>
    </source>
</evidence>
<evidence type="ECO:0000305" key="2"/>
<feature type="chain" id="PRO_0000129867" description="Small ribosomal subunit protein uS19">
    <location>
        <begin position="1"/>
        <end position="93"/>
    </location>
</feature>
<organism>
    <name type="scientific">Nocardia farcinica (strain IFM 10152)</name>
    <dbReference type="NCBI Taxonomy" id="247156"/>
    <lineage>
        <taxon>Bacteria</taxon>
        <taxon>Bacillati</taxon>
        <taxon>Actinomycetota</taxon>
        <taxon>Actinomycetes</taxon>
        <taxon>Mycobacteriales</taxon>
        <taxon>Nocardiaceae</taxon>
        <taxon>Nocardia</taxon>
    </lineage>
</organism>
<accession>Q5Z1V9</accession>
<proteinExistence type="inferred from homology"/>
<protein>
    <recommendedName>
        <fullName evidence="1">Small ribosomal subunit protein uS19</fullName>
    </recommendedName>
    <alternativeName>
        <fullName evidence="2">30S ribosomal protein S19</fullName>
    </alternativeName>
</protein>
<keyword id="KW-1185">Reference proteome</keyword>
<keyword id="KW-0687">Ribonucleoprotein</keyword>
<keyword id="KW-0689">Ribosomal protein</keyword>
<keyword id="KW-0694">RNA-binding</keyword>
<keyword id="KW-0699">rRNA-binding</keyword>